<dbReference type="EC" id="1.1.1.94" evidence="1"/>
<dbReference type="EMBL" id="AE017321">
    <property type="protein sequence ID" value="AAW71185.1"/>
    <property type="molecule type" value="Genomic_DNA"/>
</dbReference>
<dbReference type="RefSeq" id="WP_011256795.1">
    <property type="nucleotide sequence ID" value="NC_006833.1"/>
</dbReference>
<dbReference type="SMR" id="Q5GS39"/>
<dbReference type="STRING" id="292805.Wbm0597"/>
<dbReference type="KEGG" id="wbm:Wbm0597"/>
<dbReference type="eggNOG" id="COG0240">
    <property type="taxonomic scope" value="Bacteria"/>
</dbReference>
<dbReference type="HOGENOM" id="CLU_033449_0_0_5"/>
<dbReference type="UniPathway" id="UPA00940"/>
<dbReference type="Proteomes" id="UP000000534">
    <property type="component" value="Chromosome"/>
</dbReference>
<dbReference type="GO" id="GO:0005829">
    <property type="term" value="C:cytosol"/>
    <property type="evidence" value="ECO:0007669"/>
    <property type="project" value="TreeGrafter"/>
</dbReference>
<dbReference type="GO" id="GO:0047952">
    <property type="term" value="F:glycerol-3-phosphate dehydrogenase [NAD(P)+] activity"/>
    <property type="evidence" value="ECO:0007669"/>
    <property type="project" value="UniProtKB-UniRule"/>
</dbReference>
<dbReference type="GO" id="GO:0051287">
    <property type="term" value="F:NAD binding"/>
    <property type="evidence" value="ECO:0007669"/>
    <property type="project" value="InterPro"/>
</dbReference>
<dbReference type="GO" id="GO:0005975">
    <property type="term" value="P:carbohydrate metabolic process"/>
    <property type="evidence" value="ECO:0007669"/>
    <property type="project" value="InterPro"/>
</dbReference>
<dbReference type="GO" id="GO:0046167">
    <property type="term" value="P:glycerol-3-phosphate biosynthetic process"/>
    <property type="evidence" value="ECO:0007669"/>
    <property type="project" value="UniProtKB-UniRule"/>
</dbReference>
<dbReference type="GO" id="GO:0046168">
    <property type="term" value="P:glycerol-3-phosphate catabolic process"/>
    <property type="evidence" value="ECO:0007669"/>
    <property type="project" value="InterPro"/>
</dbReference>
<dbReference type="GO" id="GO:0006650">
    <property type="term" value="P:glycerophospholipid metabolic process"/>
    <property type="evidence" value="ECO:0007669"/>
    <property type="project" value="UniProtKB-UniRule"/>
</dbReference>
<dbReference type="GO" id="GO:0008654">
    <property type="term" value="P:phospholipid biosynthetic process"/>
    <property type="evidence" value="ECO:0007669"/>
    <property type="project" value="UniProtKB-KW"/>
</dbReference>
<dbReference type="Gene3D" id="1.10.1040.10">
    <property type="entry name" value="N-(1-d-carboxylethyl)-l-norvaline Dehydrogenase, domain 2"/>
    <property type="match status" value="1"/>
</dbReference>
<dbReference type="Gene3D" id="3.40.50.720">
    <property type="entry name" value="NAD(P)-binding Rossmann-like Domain"/>
    <property type="match status" value="1"/>
</dbReference>
<dbReference type="HAMAP" id="MF_00394">
    <property type="entry name" value="NAD_Glyc3P_dehydrog"/>
    <property type="match status" value="1"/>
</dbReference>
<dbReference type="InterPro" id="IPR008927">
    <property type="entry name" value="6-PGluconate_DH-like_C_sf"/>
</dbReference>
<dbReference type="InterPro" id="IPR013328">
    <property type="entry name" value="6PGD_dom2"/>
</dbReference>
<dbReference type="InterPro" id="IPR006168">
    <property type="entry name" value="G3P_DH_NAD-dep"/>
</dbReference>
<dbReference type="InterPro" id="IPR006109">
    <property type="entry name" value="G3P_DH_NAD-dep_C"/>
</dbReference>
<dbReference type="InterPro" id="IPR011128">
    <property type="entry name" value="G3P_DH_NAD-dep_N"/>
</dbReference>
<dbReference type="InterPro" id="IPR036291">
    <property type="entry name" value="NAD(P)-bd_dom_sf"/>
</dbReference>
<dbReference type="NCBIfam" id="NF000940">
    <property type="entry name" value="PRK00094.1-2"/>
    <property type="match status" value="1"/>
</dbReference>
<dbReference type="NCBIfam" id="NF000942">
    <property type="entry name" value="PRK00094.1-4"/>
    <property type="match status" value="1"/>
</dbReference>
<dbReference type="NCBIfam" id="NF011213">
    <property type="entry name" value="PRK14620.1"/>
    <property type="match status" value="1"/>
</dbReference>
<dbReference type="PANTHER" id="PTHR11728">
    <property type="entry name" value="GLYCEROL-3-PHOSPHATE DEHYDROGENASE"/>
    <property type="match status" value="1"/>
</dbReference>
<dbReference type="PANTHER" id="PTHR11728:SF1">
    <property type="entry name" value="GLYCEROL-3-PHOSPHATE DEHYDROGENASE [NAD(+)] 2, CHLOROPLASTIC"/>
    <property type="match status" value="1"/>
</dbReference>
<dbReference type="Pfam" id="PF07479">
    <property type="entry name" value="NAD_Gly3P_dh_C"/>
    <property type="match status" value="1"/>
</dbReference>
<dbReference type="Pfam" id="PF01210">
    <property type="entry name" value="NAD_Gly3P_dh_N"/>
    <property type="match status" value="1"/>
</dbReference>
<dbReference type="PIRSF" id="PIRSF000114">
    <property type="entry name" value="Glycerol-3-P_dh"/>
    <property type="match status" value="1"/>
</dbReference>
<dbReference type="PRINTS" id="PR00077">
    <property type="entry name" value="GPDHDRGNASE"/>
</dbReference>
<dbReference type="SUPFAM" id="SSF48179">
    <property type="entry name" value="6-phosphogluconate dehydrogenase C-terminal domain-like"/>
    <property type="match status" value="1"/>
</dbReference>
<dbReference type="SUPFAM" id="SSF51735">
    <property type="entry name" value="NAD(P)-binding Rossmann-fold domains"/>
    <property type="match status" value="1"/>
</dbReference>
<dbReference type="PROSITE" id="PS00957">
    <property type="entry name" value="NAD_G3PDH"/>
    <property type="match status" value="1"/>
</dbReference>
<accession>Q5GS39</accession>
<comment type="function">
    <text evidence="1">Catalyzes the reduction of the glycolytic intermediate dihydroxyacetone phosphate (DHAP) to sn-glycerol 3-phosphate (G3P), the key precursor for phospholipid synthesis.</text>
</comment>
<comment type="catalytic activity">
    <reaction evidence="1">
        <text>sn-glycerol 3-phosphate + NAD(+) = dihydroxyacetone phosphate + NADH + H(+)</text>
        <dbReference type="Rhea" id="RHEA:11092"/>
        <dbReference type="ChEBI" id="CHEBI:15378"/>
        <dbReference type="ChEBI" id="CHEBI:57540"/>
        <dbReference type="ChEBI" id="CHEBI:57597"/>
        <dbReference type="ChEBI" id="CHEBI:57642"/>
        <dbReference type="ChEBI" id="CHEBI:57945"/>
        <dbReference type="EC" id="1.1.1.94"/>
    </reaction>
    <physiologicalReaction direction="right-to-left" evidence="1">
        <dbReference type="Rhea" id="RHEA:11094"/>
    </physiologicalReaction>
</comment>
<comment type="catalytic activity">
    <reaction evidence="1">
        <text>sn-glycerol 3-phosphate + NADP(+) = dihydroxyacetone phosphate + NADPH + H(+)</text>
        <dbReference type="Rhea" id="RHEA:11096"/>
        <dbReference type="ChEBI" id="CHEBI:15378"/>
        <dbReference type="ChEBI" id="CHEBI:57597"/>
        <dbReference type="ChEBI" id="CHEBI:57642"/>
        <dbReference type="ChEBI" id="CHEBI:57783"/>
        <dbReference type="ChEBI" id="CHEBI:58349"/>
        <dbReference type="EC" id="1.1.1.94"/>
    </reaction>
    <physiologicalReaction direction="right-to-left" evidence="1">
        <dbReference type="Rhea" id="RHEA:11098"/>
    </physiologicalReaction>
</comment>
<comment type="pathway">
    <text evidence="1">Membrane lipid metabolism; glycerophospholipid metabolism.</text>
</comment>
<comment type="subcellular location">
    <subcellularLocation>
        <location evidence="1">Cytoplasm</location>
    </subcellularLocation>
</comment>
<comment type="similarity">
    <text evidence="1">Belongs to the NAD-dependent glycerol-3-phosphate dehydrogenase family.</text>
</comment>
<keyword id="KW-0963">Cytoplasm</keyword>
<keyword id="KW-0444">Lipid biosynthesis</keyword>
<keyword id="KW-0443">Lipid metabolism</keyword>
<keyword id="KW-0520">NAD</keyword>
<keyword id="KW-0521">NADP</keyword>
<keyword id="KW-0547">Nucleotide-binding</keyword>
<keyword id="KW-0560">Oxidoreductase</keyword>
<keyword id="KW-0594">Phospholipid biosynthesis</keyword>
<keyword id="KW-1208">Phospholipid metabolism</keyword>
<keyword id="KW-1185">Reference proteome</keyword>
<protein>
    <recommendedName>
        <fullName evidence="1">Glycerol-3-phosphate dehydrogenase [NAD(P)+]</fullName>
        <ecNumber evidence="1">1.1.1.94</ecNumber>
    </recommendedName>
    <alternativeName>
        <fullName evidence="1">NAD(P)(+)-dependent glycerol-3-phosphate dehydrogenase</fullName>
    </alternativeName>
    <alternativeName>
        <fullName evidence="1">NAD(P)H-dependent dihydroxyacetone-phosphate reductase</fullName>
    </alternativeName>
</protein>
<organism>
    <name type="scientific">Wolbachia sp. subsp. Brugia malayi (strain TRS)</name>
    <dbReference type="NCBI Taxonomy" id="292805"/>
    <lineage>
        <taxon>Bacteria</taxon>
        <taxon>Pseudomonadati</taxon>
        <taxon>Pseudomonadota</taxon>
        <taxon>Alphaproteobacteria</taxon>
        <taxon>Rickettsiales</taxon>
        <taxon>Anaplasmataceae</taxon>
        <taxon>Wolbachieae</taxon>
        <taxon>Wolbachia</taxon>
    </lineage>
</organism>
<name>GPDA_WOLTR</name>
<sequence length="327" mass="35127">MTISILGAGAWGTAIANSLSGKQNVILWTHNKTTFESISRTRESDKLLGCQIPENVSVKLAIKETVNASAMIFAVPTQSLRKVCQQLHDCNLKKDVAIILACKGIEKSTLKLPSEIVNEVLPNNPVAIFSGPSFAIEVAKKLPYSMVLACQDDTLGSKLISELQQENIKLHFSSDVVGVQICAALKNVFAIACGIVLGKKLGFNAHAALVTKSMNEVKTLYLAKTDSVSIDIDTLLGPACLGDLIMTCTSLNSRNLSFGFKIGSSNNSFDAQQTLSEGKSVIEGFSTAQSAFNLAEKLKIKMPICEAVYRLLYESASIEDTISVFVG</sequence>
<gene>
    <name evidence="1" type="primary">gpsA</name>
    <name type="ordered locus">Wbm0597</name>
</gene>
<proteinExistence type="inferred from homology"/>
<evidence type="ECO:0000255" key="1">
    <source>
        <dbReference type="HAMAP-Rule" id="MF_00394"/>
    </source>
</evidence>
<feature type="chain" id="PRO_0000255395" description="Glycerol-3-phosphate dehydrogenase [NAD(P)+]">
    <location>
        <begin position="1"/>
        <end position="327"/>
    </location>
</feature>
<feature type="active site" description="Proton acceptor" evidence="1">
    <location>
        <position position="186"/>
    </location>
</feature>
<feature type="binding site" evidence="1">
    <location>
        <position position="11"/>
    </location>
    <ligand>
        <name>NADPH</name>
        <dbReference type="ChEBI" id="CHEBI:57783"/>
    </ligand>
</feature>
<feature type="binding site" evidence="1">
    <location>
        <position position="30"/>
    </location>
    <ligand>
        <name>NADPH</name>
        <dbReference type="ChEBI" id="CHEBI:57783"/>
    </ligand>
</feature>
<feature type="binding site" evidence="1">
    <location>
        <position position="103"/>
    </location>
    <ligand>
        <name>NADPH</name>
        <dbReference type="ChEBI" id="CHEBI:57783"/>
    </ligand>
</feature>
<feature type="binding site" evidence="1">
    <location>
        <position position="103"/>
    </location>
    <ligand>
        <name>sn-glycerol 3-phosphate</name>
        <dbReference type="ChEBI" id="CHEBI:57597"/>
    </ligand>
</feature>
<feature type="binding site" evidence="1">
    <location>
        <position position="131"/>
    </location>
    <ligand>
        <name>sn-glycerol 3-phosphate</name>
        <dbReference type="ChEBI" id="CHEBI:57597"/>
    </ligand>
</feature>
<feature type="binding site" evidence="1">
    <location>
        <position position="133"/>
    </location>
    <ligand>
        <name>sn-glycerol 3-phosphate</name>
        <dbReference type="ChEBI" id="CHEBI:57597"/>
    </ligand>
</feature>
<feature type="binding site" evidence="1">
    <location>
        <position position="135"/>
    </location>
    <ligand>
        <name>NADPH</name>
        <dbReference type="ChEBI" id="CHEBI:57783"/>
    </ligand>
</feature>
<feature type="binding site" evidence="1">
    <location>
        <position position="186"/>
    </location>
    <ligand>
        <name>sn-glycerol 3-phosphate</name>
        <dbReference type="ChEBI" id="CHEBI:57597"/>
    </ligand>
</feature>
<feature type="binding site" evidence="1">
    <location>
        <position position="243"/>
    </location>
    <ligand>
        <name>sn-glycerol 3-phosphate</name>
        <dbReference type="ChEBI" id="CHEBI:57597"/>
    </ligand>
</feature>
<feature type="binding site" evidence="1">
    <location>
        <position position="253"/>
    </location>
    <ligand>
        <name>sn-glycerol 3-phosphate</name>
        <dbReference type="ChEBI" id="CHEBI:57597"/>
    </ligand>
</feature>
<feature type="binding site" evidence="1">
    <location>
        <position position="254"/>
    </location>
    <ligand>
        <name>NADPH</name>
        <dbReference type="ChEBI" id="CHEBI:57783"/>
    </ligand>
</feature>
<feature type="binding site" evidence="1">
    <location>
        <position position="254"/>
    </location>
    <ligand>
        <name>sn-glycerol 3-phosphate</name>
        <dbReference type="ChEBI" id="CHEBI:57597"/>
    </ligand>
</feature>
<feature type="binding site" evidence="1">
    <location>
        <position position="255"/>
    </location>
    <ligand>
        <name>sn-glycerol 3-phosphate</name>
        <dbReference type="ChEBI" id="CHEBI:57597"/>
    </ligand>
</feature>
<feature type="binding site" evidence="1">
    <location>
        <position position="281"/>
    </location>
    <ligand>
        <name>NADPH</name>
        <dbReference type="ChEBI" id="CHEBI:57783"/>
    </ligand>
</feature>
<feature type="binding site" evidence="1">
    <location>
        <position position="283"/>
    </location>
    <ligand>
        <name>NADPH</name>
        <dbReference type="ChEBI" id="CHEBI:57783"/>
    </ligand>
</feature>
<reference key="1">
    <citation type="journal article" date="2005" name="PLoS Biol.">
        <title>The Wolbachia genome of Brugia malayi: endosymbiont evolution within a human pathogenic nematode.</title>
        <authorList>
            <person name="Foster J."/>
            <person name="Ganatra M."/>
            <person name="Kamal I."/>
            <person name="Ware J."/>
            <person name="Makarova K."/>
            <person name="Ivanova N."/>
            <person name="Bhattacharyya A."/>
            <person name="Kapatral V."/>
            <person name="Kumar S."/>
            <person name="Posfai J."/>
            <person name="Vincze T."/>
            <person name="Ingram J."/>
            <person name="Moran L."/>
            <person name="Lapidus A."/>
            <person name="Omelchenko M."/>
            <person name="Kyrpides N."/>
            <person name="Ghedin E."/>
            <person name="Wang S."/>
            <person name="Goltsman E."/>
            <person name="Joukov V."/>
            <person name="Ostrovskaya O."/>
            <person name="Tsukerman K."/>
            <person name="Mazur M."/>
            <person name="Comb D."/>
            <person name="Koonin E."/>
            <person name="Slatko B."/>
        </authorList>
    </citation>
    <scope>NUCLEOTIDE SEQUENCE [LARGE SCALE GENOMIC DNA]</scope>
    <source>
        <strain>TRS</strain>
    </source>
</reference>